<comment type="function">
    <text evidence="1">Responsible for the release of ribosomes from messenger RNA at the termination of protein biosynthesis. May increase the efficiency of translation by recycling ribosomes from one round of translation to another.</text>
</comment>
<comment type="subcellular location">
    <subcellularLocation>
        <location evidence="1">Cytoplasm</location>
    </subcellularLocation>
</comment>
<comment type="similarity">
    <text evidence="1">Belongs to the RRF family.</text>
</comment>
<gene>
    <name evidence="1" type="primary">frr</name>
    <name type="ordered locus">azo1906</name>
</gene>
<dbReference type="EMBL" id="AM406670">
    <property type="protein sequence ID" value="CAL94523.1"/>
    <property type="molecule type" value="Genomic_DNA"/>
</dbReference>
<dbReference type="RefSeq" id="WP_011765639.1">
    <property type="nucleotide sequence ID" value="NC_008702.1"/>
</dbReference>
<dbReference type="SMR" id="A1K6R8"/>
<dbReference type="STRING" id="62928.azo1906"/>
<dbReference type="KEGG" id="aoa:dqs_2061"/>
<dbReference type="KEGG" id="azo:azo1906"/>
<dbReference type="eggNOG" id="COG0233">
    <property type="taxonomic scope" value="Bacteria"/>
</dbReference>
<dbReference type="HOGENOM" id="CLU_073981_2_0_4"/>
<dbReference type="OrthoDB" id="9804006at2"/>
<dbReference type="Proteomes" id="UP000002588">
    <property type="component" value="Chromosome"/>
</dbReference>
<dbReference type="GO" id="GO:0005829">
    <property type="term" value="C:cytosol"/>
    <property type="evidence" value="ECO:0007669"/>
    <property type="project" value="GOC"/>
</dbReference>
<dbReference type="GO" id="GO:0043023">
    <property type="term" value="F:ribosomal large subunit binding"/>
    <property type="evidence" value="ECO:0007669"/>
    <property type="project" value="TreeGrafter"/>
</dbReference>
<dbReference type="GO" id="GO:0002184">
    <property type="term" value="P:cytoplasmic translational termination"/>
    <property type="evidence" value="ECO:0007669"/>
    <property type="project" value="TreeGrafter"/>
</dbReference>
<dbReference type="CDD" id="cd00520">
    <property type="entry name" value="RRF"/>
    <property type="match status" value="1"/>
</dbReference>
<dbReference type="FunFam" id="1.10.132.20:FF:000001">
    <property type="entry name" value="Ribosome-recycling factor"/>
    <property type="match status" value="1"/>
</dbReference>
<dbReference type="FunFam" id="3.30.1360.40:FF:000001">
    <property type="entry name" value="Ribosome-recycling factor"/>
    <property type="match status" value="1"/>
</dbReference>
<dbReference type="Gene3D" id="3.30.1360.40">
    <property type="match status" value="1"/>
</dbReference>
<dbReference type="Gene3D" id="1.10.132.20">
    <property type="entry name" value="Ribosome-recycling factor"/>
    <property type="match status" value="1"/>
</dbReference>
<dbReference type="HAMAP" id="MF_00040">
    <property type="entry name" value="RRF"/>
    <property type="match status" value="1"/>
</dbReference>
<dbReference type="InterPro" id="IPR002661">
    <property type="entry name" value="Ribosome_recyc_fac"/>
</dbReference>
<dbReference type="InterPro" id="IPR023584">
    <property type="entry name" value="Ribosome_recyc_fac_dom"/>
</dbReference>
<dbReference type="InterPro" id="IPR036191">
    <property type="entry name" value="RRF_sf"/>
</dbReference>
<dbReference type="NCBIfam" id="TIGR00496">
    <property type="entry name" value="frr"/>
    <property type="match status" value="1"/>
</dbReference>
<dbReference type="PANTHER" id="PTHR20982:SF3">
    <property type="entry name" value="MITOCHONDRIAL RIBOSOME RECYCLING FACTOR PSEUDO 1"/>
    <property type="match status" value="1"/>
</dbReference>
<dbReference type="PANTHER" id="PTHR20982">
    <property type="entry name" value="RIBOSOME RECYCLING FACTOR"/>
    <property type="match status" value="1"/>
</dbReference>
<dbReference type="Pfam" id="PF01765">
    <property type="entry name" value="RRF"/>
    <property type="match status" value="1"/>
</dbReference>
<dbReference type="SUPFAM" id="SSF55194">
    <property type="entry name" value="Ribosome recycling factor, RRF"/>
    <property type="match status" value="1"/>
</dbReference>
<keyword id="KW-0963">Cytoplasm</keyword>
<keyword id="KW-0648">Protein biosynthesis</keyword>
<keyword id="KW-1185">Reference proteome</keyword>
<proteinExistence type="inferred from homology"/>
<accession>A1K6R8</accession>
<name>RRF_AZOSB</name>
<evidence type="ECO:0000255" key="1">
    <source>
        <dbReference type="HAMAP-Rule" id="MF_00040"/>
    </source>
</evidence>
<feature type="chain" id="PRO_1000003104" description="Ribosome-recycling factor">
    <location>
        <begin position="1"/>
        <end position="185"/>
    </location>
</feature>
<organism>
    <name type="scientific">Azoarcus sp. (strain BH72)</name>
    <dbReference type="NCBI Taxonomy" id="418699"/>
    <lineage>
        <taxon>Bacteria</taxon>
        <taxon>Pseudomonadati</taxon>
        <taxon>Pseudomonadota</taxon>
        <taxon>Betaproteobacteria</taxon>
        <taxon>Rhodocyclales</taxon>
        <taxon>Zoogloeaceae</taxon>
        <taxon>Azoarcus</taxon>
    </lineage>
</organism>
<protein>
    <recommendedName>
        <fullName evidence="1">Ribosome-recycling factor</fullName>
        <shortName evidence="1">RRF</shortName>
    </recommendedName>
    <alternativeName>
        <fullName evidence="1">Ribosome-releasing factor</fullName>
    </alternativeName>
</protein>
<reference key="1">
    <citation type="journal article" date="2006" name="Nat. Biotechnol.">
        <title>Complete genome of the mutualistic, N2-fixing grass endophyte Azoarcus sp. strain BH72.</title>
        <authorList>
            <person name="Krause A."/>
            <person name="Ramakumar A."/>
            <person name="Bartels D."/>
            <person name="Battistoni F."/>
            <person name="Bekel T."/>
            <person name="Boch J."/>
            <person name="Boehm M."/>
            <person name="Friedrich F."/>
            <person name="Hurek T."/>
            <person name="Krause L."/>
            <person name="Linke B."/>
            <person name="McHardy A.C."/>
            <person name="Sarkar A."/>
            <person name="Schneiker S."/>
            <person name="Syed A.A."/>
            <person name="Thauer R."/>
            <person name="Vorhoelter F.-J."/>
            <person name="Weidner S."/>
            <person name="Puehler A."/>
            <person name="Reinhold-Hurek B."/>
            <person name="Kaiser O."/>
            <person name="Goesmann A."/>
        </authorList>
    </citation>
    <scope>NUCLEOTIDE SEQUENCE [LARGE SCALE GENOMIC DNA]</scope>
    <source>
        <strain>BH72</strain>
    </source>
</reference>
<sequence>MISDLKKTTEQKMQKSIDALKTDLAKIRTGRAHTGLLDHVMVEYYGSMVPINQVANITLIDARTIGVQTWEKPMLGKVEKAIRDCDLGLNPANMGEIIRVPMPALTEERRRDLTKVVRQEGETAKVAVRNLRRDANQHLKDAVKDKTISEDDERRSQDDIQKLTDKYVAEIDKLLAQKEQELMQI</sequence>